<protein>
    <recommendedName>
        <fullName evidence="1">DNA-directed RNA polymerase subunit beta</fullName>
        <ecNumber evidence="1">2.7.7.6</ecNumber>
    </recommendedName>
    <alternativeName>
        <fullName evidence="1">PEP</fullName>
    </alternativeName>
    <alternativeName>
        <fullName evidence="1">Plastid-encoded RNA polymerase subunit beta</fullName>
        <shortName evidence="1">RNA polymerase subunit beta</shortName>
    </alternativeName>
</protein>
<dbReference type="EC" id="2.7.7.6" evidence="1"/>
<dbReference type="EMBL" id="DQ923116">
    <property type="protein sequence ID" value="ABI49770.1"/>
    <property type="molecule type" value="Genomic_DNA"/>
</dbReference>
<dbReference type="RefSeq" id="YP_740557.1">
    <property type="nucleotide sequence ID" value="NC_008335.1"/>
</dbReference>
<dbReference type="SMR" id="Q09G54"/>
<dbReference type="GeneID" id="4271289"/>
<dbReference type="GO" id="GO:0009507">
    <property type="term" value="C:chloroplast"/>
    <property type="evidence" value="ECO:0007669"/>
    <property type="project" value="UniProtKB-SubCell"/>
</dbReference>
<dbReference type="GO" id="GO:0000428">
    <property type="term" value="C:DNA-directed RNA polymerase complex"/>
    <property type="evidence" value="ECO:0007669"/>
    <property type="project" value="UniProtKB-KW"/>
</dbReference>
<dbReference type="GO" id="GO:0005739">
    <property type="term" value="C:mitochondrion"/>
    <property type="evidence" value="ECO:0007669"/>
    <property type="project" value="GOC"/>
</dbReference>
<dbReference type="GO" id="GO:0003677">
    <property type="term" value="F:DNA binding"/>
    <property type="evidence" value="ECO:0007669"/>
    <property type="project" value="UniProtKB-UniRule"/>
</dbReference>
<dbReference type="GO" id="GO:0003899">
    <property type="term" value="F:DNA-directed RNA polymerase activity"/>
    <property type="evidence" value="ECO:0007669"/>
    <property type="project" value="UniProtKB-UniRule"/>
</dbReference>
<dbReference type="GO" id="GO:0032549">
    <property type="term" value="F:ribonucleoside binding"/>
    <property type="evidence" value="ECO:0007669"/>
    <property type="project" value="InterPro"/>
</dbReference>
<dbReference type="GO" id="GO:0006351">
    <property type="term" value="P:DNA-templated transcription"/>
    <property type="evidence" value="ECO:0007669"/>
    <property type="project" value="UniProtKB-UniRule"/>
</dbReference>
<dbReference type="CDD" id="cd00653">
    <property type="entry name" value="RNA_pol_B_RPB2"/>
    <property type="match status" value="1"/>
</dbReference>
<dbReference type="FunFam" id="2.40.50.150:FF:000006">
    <property type="entry name" value="DNA-directed RNA polymerase subunit beta"/>
    <property type="match status" value="1"/>
</dbReference>
<dbReference type="FunFam" id="3.90.1110.10:FF:000009">
    <property type="entry name" value="DNA-directed RNA polymerase subunit beta"/>
    <property type="match status" value="1"/>
</dbReference>
<dbReference type="Gene3D" id="2.40.50.100">
    <property type="match status" value="1"/>
</dbReference>
<dbReference type="Gene3D" id="2.40.50.150">
    <property type="match status" value="1"/>
</dbReference>
<dbReference type="Gene3D" id="3.90.1100.10">
    <property type="match status" value="1"/>
</dbReference>
<dbReference type="Gene3D" id="2.30.150.10">
    <property type="entry name" value="DNA-directed RNA polymerase, beta subunit, external 1 domain"/>
    <property type="match status" value="1"/>
</dbReference>
<dbReference type="Gene3D" id="2.40.270.10">
    <property type="entry name" value="DNA-directed RNA polymerase, subunit 2, domain 6"/>
    <property type="match status" value="1"/>
</dbReference>
<dbReference type="Gene3D" id="3.90.1800.10">
    <property type="entry name" value="RNA polymerase alpha subunit dimerisation domain"/>
    <property type="match status" value="1"/>
</dbReference>
<dbReference type="Gene3D" id="3.90.1110.10">
    <property type="entry name" value="RNA polymerase Rpb2, domain 2"/>
    <property type="match status" value="1"/>
</dbReference>
<dbReference type="HAMAP" id="MF_01321">
    <property type="entry name" value="RNApol_bact_RpoB"/>
    <property type="match status" value="1"/>
</dbReference>
<dbReference type="InterPro" id="IPR042107">
    <property type="entry name" value="DNA-dir_RNA_pol_bsu_ext_1_sf"/>
</dbReference>
<dbReference type="InterPro" id="IPR015712">
    <property type="entry name" value="DNA-dir_RNA_pol_su2"/>
</dbReference>
<dbReference type="InterPro" id="IPR007120">
    <property type="entry name" value="DNA-dir_RNAP_su2_dom"/>
</dbReference>
<dbReference type="InterPro" id="IPR037033">
    <property type="entry name" value="DNA-dir_RNAP_su2_hyb_sf"/>
</dbReference>
<dbReference type="InterPro" id="IPR010243">
    <property type="entry name" value="RNA_pol_bsu_bac"/>
</dbReference>
<dbReference type="InterPro" id="IPR007121">
    <property type="entry name" value="RNA_pol_bsu_CS"/>
</dbReference>
<dbReference type="InterPro" id="IPR007642">
    <property type="entry name" value="RNA_pol_Rpb2_2"/>
</dbReference>
<dbReference type="InterPro" id="IPR037034">
    <property type="entry name" value="RNA_pol_Rpb2_2_sf"/>
</dbReference>
<dbReference type="InterPro" id="IPR007645">
    <property type="entry name" value="RNA_pol_Rpb2_3"/>
</dbReference>
<dbReference type="InterPro" id="IPR007641">
    <property type="entry name" value="RNA_pol_Rpb2_7"/>
</dbReference>
<dbReference type="InterPro" id="IPR014724">
    <property type="entry name" value="RNA_pol_RPB2_OB-fold"/>
</dbReference>
<dbReference type="NCBIfam" id="NF001616">
    <property type="entry name" value="PRK00405.1"/>
    <property type="match status" value="1"/>
</dbReference>
<dbReference type="PANTHER" id="PTHR20856">
    <property type="entry name" value="DNA-DIRECTED RNA POLYMERASE I SUBUNIT 2"/>
    <property type="match status" value="1"/>
</dbReference>
<dbReference type="Pfam" id="PF04561">
    <property type="entry name" value="RNA_pol_Rpb2_2"/>
    <property type="match status" value="1"/>
</dbReference>
<dbReference type="Pfam" id="PF04565">
    <property type="entry name" value="RNA_pol_Rpb2_3"/>
    <property type="match status" value="1"/>
</dbReference>
<dbReference type="Pfam" id="PF00562">
    <property type="entry name" value="RNA_pol_Rpb2_6"/>
    <property type="match status" value="1"/>
</dbReference>
<dbReference type="Pfam" id="PF04560">
    <property type="entry name" value="RNA_pol_Rpb2_7"/>
    <property type="match status" value="1"/>
</dbReference>
<dbReference type="SUPFAM" id="SSF64484">
    <property type="entry name" value="beta and beta-prime subunits of DNA dependent RNA-polymerase"/>
    <property type="match status" value="1"/>
</dbReference>
<dbReference type="PROSITE" id="PS01166">
    <property type="entry name" value="RNA_POL_BETA"/>
    <property type="match status" value="1"/>
</dbReference>
<name>RPOB_PLAOC</name>
<geneLocation type="chloroplast"/>
<feature type="chain" id="PRO_0000300452" description="DNA-directed RNA polymerase subunit beta">
    <location>
        <begin position="1"/>
        <end position="1070"/>
    </location>
</feature>
<keyword id="KW-0150">Chloroplast</keyword>
<keyword id="KW-0240">DNA-directed RNA polymerase</keyword>
<keyword id="KW-0548">Nucleotidyltransferase</keyword>
<keyword id="KW-0934">Plastid</keyword>
<keyword id="KW-0804">Transcription</keyword>
<keyword id="KW-0808">Transferase</keyword>
<comment type="function">
    <text evidence="1">DNA-dependent RNA polymerase catalyzes the transcription of DNA into RNA using the four ribonucleoside triphosphates as substrates.</text>
</comment>
<comment type="catalytic activity">
    <reaction evidence="1">
        <text>RNA(n) + a ribonucleoside 5'-triphosphate = RNA(n+1) + diphosphate</text>
        <dbReference type="Rhea" id="RHEA:21248"/>
        <dbReference type="Rhea" id="RHEA-COMP:14527"/>
        <dbReference type="Rhea" id="RHEA-COMP:17342"/>
        <dbReference type="ChEBI" id="CHEBI:33019"/>
        <dbReference type="ChEBI" id="CHEBI:61557"/>
        <dbReference type="ChEBI" id="CHEBI:140395"/>
        <dbReference type="EC" id="2.7.7.6"/>
    </reaction>
</comment>
<comment type="subunit">
    <text evidence="1">In plastids the minimal PEP RNA polymerase catalytic core is composed of four subunits: alpha, beta, beta', and beta''. When a (nuclear-encoded) sigma factor is associated with the core the holoenzyme is formed, which can initiate transcription.</text>
</comment>
<comment type="subcellular location">
    <subcellularLocation>
        <location>Plastid</location>
        <location>Chloroplast</location>
    </subcellularLocation>
</comment>
<comment type="similarity">
    <text evidence="1">Belongs to the RNA polymerase beta chain family.</text>
</comment>
<organism>
    <name type="scientific">Platanus occidentalis</name>
    <name type="common">Sycamore</name>
    <name type="synonym">American plane tree</name>
    <dbReference type="NCBI Taxonomy" id="4403"/>
    <lineage>
        <taxon>Eukaryota</taxon>
        <taxon>Viridiplantae</taxon>
        <taxon>Streptophyta</taxon>
        <taxon>Embryophyta</taxon>
        <taxon>Tracheophyta</taxon>
        <taxon>Spermatophyta</taxon>
        <taxon>Magnoliopsida</taxon>
        <taxon>Proteales</taxon>
        <taxon>Platanaceae</taxon>
        <taxon>Platanus</taxon>
    </lineage>
</organism>
<accession>Q09G54</accession>
<evidence type="ECO:0000255" key="1">
    <source>
        <dbReference type="HAMAP-Rule" id="MF_01321"/>
    </source>
</evidence>
<reference key="1">
    <citation type="journal article" date="2006" name="BMC Plant Biol.">
        <title>Rapid and accurate pyrosequencing of angiosperm plastid genomes.</title>
        <authorList>
            <person name="Moore M.J."/>
            <person name="Dhingra A."/>
            <person name="Soltis P.S."/>
            <person name="Shaw R."/>
            <person name="Farmerie W.G."/>
            <person name="Folta K.M."/>
            <person name="Soltis D.E."/>
        </authorList>
    </citation>
    <scope>NUCLEOTIDE SEQUENCE [LARGE SCALE GENOMIC DNA]</scope>
</reference>
<sequence length="1070" mass="120663">MRRDGNEGMSTIPGFNQIQFEGFCRFIDQGLTEELYKFPKIEDTDQEIEFQLFVETYQLVEPLIKERDAVYESLTYSSEVYVPAGLIWKPGRDMQEQTIFIGNIPLMNSLGTSIVNGIYRIVINQILQSPGIYYRSESDHNGISVYTGTIISDWGGRSELEIDRKARIWARVSRKQKISILVPSSAMGSNLREILDNVCYPEIFLSFLNDKEKKKIGSKENAILEFYQQFACVGGDPVFSESLCKELQKKFFQQRCELGRIGRRNMNRRLNLDIPQNNTFLLPRDVLAAADHLIGMKFGMGTLDDMNHLKNKRIRSVADLLQDQFGLALIRLENVVRGTICGAIKHKLIPTPQNLVTSTPLTTTYESFFGLHPLSQVLDRTNPLTQMVHGRKLSYLGPGGLTGRTASFRIRDIHSSHYGRICPIDTSEGINVGLIGSLAIYARIGHWGSLESPFYEISDRSKEVQMLYLSPSRDEYYMVAAGNSLALNQSIPEEQVVPARYRQEFLTIAWEQVHFRSIFPFQYFSIGASLIPFIEHNDANRALMSSNMQRQAVPLSQSEKCIVGTGLERQAALDSGVSTIAEHEGKIIYTDTDKIILLGNGDTLSIPLVMYQRSNKNTCMYQKPQVRRGKFIKKGQIVADGAATVGGELALGKNVLVAYMPWEGYNSEDAVLISERLVYGDIYTSFHIRKYEIQTHVTSQGPERITNEIPHLEAHLLRNLDRNGIVMLGSWVETGDILVGKLTPQMAKESSYAPEDRLLRAILGIQVSTSKETCLKLPIGGRGRVIDVRWIQKKGGSSYNPETICVYISQKREIKVGDKVAGRHGNKGIISKILPRQDMPYLQDGTPIDMVFNPLGVPSRMNVGQIFECSLGLAGDLLDRHYRIAPFDERYEQEASRKLVFSELYKASKQTANPWVFEPEYPGKSRIFDGRTGDPFEQPVLIGKSYILKLIHQVDDKIHGRSSGHYALVTQQPLRGRAKQGGQRVGEMEVWALEGFGVAHILQEMLTYKSDHIRARQEVLGTTIVGGTIPSPEDAPESFRLLVRELRSLALELNHFLVSEKNFQINRKEA</sequence>
<proteinExistence type="inferred from homology"/>
<gene>
    <name evidence="1" type="primary">rpoB</name>
</gene>